<evidence type="ECO:0000250" key="1"/>
<evidence type="ECO:0000250" key="2">
    <source>
        <dbReference type="UniProtKB" id="P00157"/>
    </source>
</evidence>
<evidence type="ECO:0000255" key="3">
    <source>
        <dbReference type="PROSITE-ProRule" id="PRU00967"/>
    </source>
</evidence>
<evidence type="ECO:0000255" key="4">
    <source>
        <dbReference type="PROSITE-ProRule" id="PRU00968"/>
    </source>
</evidence>
<name>CYB_MYOLV</name>
<dbReference type="EMBL" id="AF376853">
    <property type="protein sequence ID" value="AAK57672.1"/>
    <property type="molecule type" value="Genomic_DNA"/>
</dbReference>
<dbReference type="GO" id="GO:0005743">
    <property type="term" value="C:mitochondrial inner membrane"/>
    <property type="evidence" value="ECO:0007669"/>
    <property type="project" value="UniProtKB-SubCell"/>
</dbReference>
<dbReference type="GO" id="GO:0045275">
    <property type="term" value="C:respiratory chain complex III"/>
    <property type="evidence" value="ECO:0007669"/>
    <property type="project" value="InterPro"/>
</dbReference>
<dbReference type="GO" id="GO:0046872">
    <property type="term" value="F:metal ion binding"/>
    <property type="evidence" value="ECO:0007669"/>
    <property type="project" value="UniProtKB-KW"/>
</dbReference>
<dbReference type="GO" id="GO:0008121">
    <property type="term" value="F:ubiquinol-cytochrome-c reductase activity"/>
    <property type="evidence" value="ECO:0007669"/>
    <property type="project" value="InterPro"/>
</dbReference>
<dbReference type="GO" id="GO:0006122">
    <property type="term" value="P:mitochondrial electron transport, ubiquinol to cytochrome c"/>
    <property type="evidence" value="ECO:0007669"/>
    <property type="project" value="TreeGrafter"/>
</dbReference>
<dbReference type="CDD" id="cd00290">
    <property type="entry name" value="cytochrome_b_C"/>
    <property type="match status" value="1"/>
</dbReference>
<dbReference type="CDD" id="cd00284">
    <property type="entry name" value="Cytochrome_b_N"/>
    <property type="match status" value="1"/>
</dbReference>
<dbReference type="FunFam" id="1.20.810.10:FF:000002">
    <property type="entry name" value="Cytochrome b"/>
    <property type="match status" value="1"/>
</dbReference>
<dbReference type="Gene3D" id="1.20.810.10">
    <property type="entry name" value="Cytochrome Bc1 Complex, Chain C"/>
    <property type="match status" value="1"/>
</dbReference>
<dbReference type="InterPro" id="IPR005798">
    <property type="entry name" value="Cyt_b/b6_C"/>
</dbReference>
<dbReference type="InterPro" id="IPR036150">
    <property type="entry name" value="Cyt_b/b6_C_sf"/>
</dbReference>
<dbReference type="InterPro" id="IPR005797">
    <property type="entry name" value="Cyt_b/b6_N"/>
</dbReference>
<dbReference type="InterPro" id="IPR027387">
    <property type="entry name" value="Cytb/b6-like_sf"/>
</dbReference>
<dbReference type="InterPro" id="IPR030689">
    <property type="entry name" value="Cytochrome_b"/>
</dbReference>
<dbReference type="InterPro" id="IPR048260">
    <property type="entry name" value="Cytochrome_b_C_euk/bac"/>
</dbReference>
<dbReference type="InterPro" id="IPR048259">
    <property type="entry name" value="Cytochrome_b_N_euk/bac"/>
</dbReference>
<dbReference type="InterPro" id="IPR016174">
    <property type="entry name" value="Di-haem_cyt_TM"/>
</dbReference>
<dbReference type="PANTHER" id="PTHR19271">
    <property type="entry name" value="CYTOCHROME B"/>
    <property type="match status" value="1"/>
</dbReference>
<dbReference type="PANTHER" id="PTHR19271:SF16">
    <property type="entry name" value="CYTOCHROME B"/>
    <property type="match status" value="1"/>
</dbReference>
<dbReference type="Pfam" id="PF00032">
    <property type="entry name" value="Cytochrom_B_C"/>
    <property type="match status" value="1"/>
</dbReference>
<dbReference type="Pfam" id="PF00033">
    <property type="entry name" value="Cytochrome_B"/>
    <property type="match status" value="1"/>
</dbReference>
<dbReference type="PIRSF" id="PIRSF038885">
    <property type="entry name" value="COB"/>
    <property type="match status" value="1"/>
</dbReference>
<dbReference type="SUPFAM" id="SSF81648">
    <property type="entry name" value="a domain/subunit of cytochrome bc1 complex (Ubiquinol-cytochrome c reductase)"/>
    <property type="match status" value="1"/>
</dbReference>
<dbReference type="SUPFAM" id="SSF81342">
    <property type="entry name" value="Transmembrane di-heme cytochromes"/>
    <property type="match status" value="1"/>
</dbReference>
<dbReference type="PROSITE" id="PS51003">
    <property type="entry name" value="CYTB_CTER"/>
    <property type="match status" value="1"/>
</dbReference>
<dbReference type="PROSITE" id="PS51002">
    <property type="entry name" value="CYTB_NTER"/>
    <property type="match status" value="1"/>
</dbReference>
<proteinExistence type="inferred from homology"/>
<organism>
    <name type="scientific">Myotis levis</name>
    <name type="common">Yellowish myotis</name>
    <name type="synonym">Vespertilio levis</name>
    <dbReference type="NCBI Taxonomy" id="153285"/>
    <lineage>
        <taxon>Eukaryota</taxon>
        <taxon>Metazoa</taxon>
        <taxon>Chordata</taxon>
        <taxon>Craniata</taxon>
        <taxon>Vertebrata</taxon>
        <taxon>Euteleostomi</taxon>
        <taxon>Mammalia</taxon>
        <taxon>Eutheria</taxon>
        <taxon>Laurasiatheria</taxon>
        <taxon>Chiroptera</taxon>
        <taxon>Yangochiroptera</taxon>
        <taxon>Vespertilionidae</taxon>
        <taxon>Myotis</taxon>
    </lineage>
</organism>
<reference key="1">
    <citation type="journal article" date="2001" name="Mol. Phylogenet. Evol.">
        <title>Molecular systematics of bats of the genus Myotis (Vespertilionidae) suggests deterministic ecomorphological convergences.</title>
        <authorList>
            <person name="Ruedi M."/>
            <person name="Mayer F."/>
        </authorList>
    </citation>
    <scope>NUCLEOTIDE SEQUENCE [GENOMIC DNA]</scope>
    <source>
        <strain>Isolate FMNH 141600</strain>
    </source>
</reference>
<protein>
    <recommendedName>
        <fullName>Cytochrome b</fullName>
    </recommendedName>
    <alternativeName>
        <fullName>Complex III subunit 3</fullName>
    </alternativeName>
    <alternativeName>
        <fullName>Complex III subunit III</fullName>
    </alternativeName>
    <alternativeName>
        <fullName>Cytochrome b-c1 complex subunit 3</fullName>
    </alternativeName>
    <alternativeName>
        <fullName>Ubiquinol-cytochrome-c reductase complex cytochrome b subunit</fullName>
    </alternativeName>
</protein>
<feature type="chain" id="PRO_0000061242" description="Cytochrome b">
    <location>
        <begin position="1"/>
        <end position="379"/>
    </location>
</feature>
<feature type="transmembrane region" description="Helical" evidence="2">
    <location>
        <begin position="33"/>
        <end position="53"/>
    </location>
</feature>
<feature type="transmembrane region" description="Helical" evidence="2">
    <location>
        <begin position="77"/>
        <end position="98"/>
    </location>
</feature>
<feature type="transmembrane region" description="Helical" evidence="2">
    <location>
        <begin position="113"/>
        <end position="133"/>
    </location>
</feature>
<feature type="transmembrane region" description="Helical" evidence="2">
    <location>
        <begin position="178"/>
        <end position="198"/>
    </location>
</feature>
<feature type="transmembrane region" description="Helical" evidence="2">
    <location>
        <begin position="226"/>
        <end position="246"/>
    </location>
</feature>
<feature type="transmembrane region" description="Helical" evidence="2">
    <location>
        <begin position="288"/>
        <end position="308"/>
    </location>
</feature>
<feature type="transmembrane region" description="Helical" evidence="2">
    <location>
        <begin position="320"/>
        <end position="340"/>
    </location>
</feature>
<feature type="transmembrane region" description="Helical" evidence="2">
    <location>
        <begin position="347"/>
        <end position="367"/>
    </location>
</feature>
<feature type="binding site" description="axial binding residue" evidence="2">
    <location>
        <position position="83"/>
    </location>
    <ligand>
        <name>heme b</name>
        <dbReference type="ChEBI" id="CHEBI:60344"/>
        <label>b562</label>
    </ligand>
    <ligandPart>
        <name>Fe</name>
        <dbReference type="ChEBI" id="CHEBI:18248"/>
    </ligandPart>
</feature>
<feature type="binding site" description="axial binding residue" evidence="2">
    <location>
        <position position="97"/>
    </location>
    <ligand>
        <name>heme b</name>
        <dbReference type="ChEBI" id="CHEBI:60344"/>
        <label>b566</label>
    </ligand>
    <ligandPart>
        <name>Fe</name>
        <dbReference type="ChEBI" id="CHEBI:18248"/>
    </ligandPart>
</feature>
<feature type="binding site" description="axial binding residue" evidence="2">
    <location>
        <position position="182"/>
    </location>
    <ligand>
        <name>heme b</name>
        <dbReference type="ChEBI" id="CHEBI:60344"/>
        <label>b562</label>
    </ligand>
    <ligandPart>
        <name>Fe</name>
        <dbReference type="ChEBI" id="CHEBI:18248"/>
    </ligandPart>
</feature>
<feature type="binding site" description="axial binding residue" evidence="2">
    <location>
        <position position="196"/>
    </location>
    <ligand>
        <name>heme b</name>
        <dbReference type="ChEBI" id="CHEBI:60344"/>
        <label>b566</label>
    </ligand>
    <ligandPart>
        <name>Fe</name>
        <dbReference type="ChEBI" id="CHEBI:18248"/>
    </ligandPart>
</feature>
<feature type="binding site" evidence="2">
    <location>
        <position position="201"/>
    </location>
    <ligand>
        <name>a ubiquinone</name>
        <dbReference type="ChEBI" id="CHEBI:16389"/>
    </ligand>
</feature>
<comment type="function">
    <text evidence="2">Component of the ubiquinol-cytochrome c reductase complex (complex III or cytochrome b-c1 complex) that is part of the mitochondrial respiratory chain. The b-c1 complex mediates electron transfer from ubiquinol to cytochrome c. Contributes to the generation of a proton gradient across the mitochondrial membrane that is then used for ATP synthesis.</text>
</comment>
<comment type="cofactor">
    <cofactor evidence="2">
        <name>heme b</name>
        <dbReference type="ChEBI" id="CHEBI:60344"/>
    </cofactor>
    <text evidence="2">Binds 2 heme b groups non-covalently.</text>
</comment>
<comment type="subunit">
    <text evidence="2">The cytochrome bc1 complex contains 11 subunits: 3 respiratory subunits (MT-CYB, CYC1 and UQCRFS1), 2 core proteins (UQCRC1 and UQCRC2) and 6 low-molecular weight proteins (UQCRH/QCR6, UQCRB/QCR7, UQCRQ/QCR8, UQCR10/QCR9, UQCR11/QCR10 and a cleavage product of UQCRFS1). This cytochrome bc1 complex then forms a dimer.</text>
</comment>
<comment type="subcellular location">
    <subcellularLocation>
        <location evidence="2">Mitochondrion inner membrane</location>
        <topology evidence="2">Multi-pass membrane protein</topology>
    </subcellularLocation>
</comment>
<comment type="miscellaneous">
    <text evidence="1">Heme 1 (or BL or b562) is low-potential and absorbs at about 562 nm, and heme 2 (or BH or b566) is high-potential and absorbs at about 566 nm.</text>
</comment>
<comment type="similarity">
    <text evidence="3 4">Belongs to the cytochrome b family.</text>
</comment>
<comment type="caution">
    <text evidence="2">The full-length protein contains only eight transmembrane helices, not nine as predicted by bioinformatics tools.</text>
</comment>
<sequence>MTNIRKSHPLVKIINSSFIDLPAPSNISSWWNFGSLLGICLALQILTGLFLAMHYTSDTATAFNSVTHICRDVNYGWVLRYLHANGASMFFICLYLHVGRGLYYGSYMYTETWNIGVILLFAVMATAFMGYVLPWGQMSFWGATVITNLLSAIPYIGTNLVEWIWGGFSVDKATLTRFFAFHFLLPFIIAAMVMXHLLFLHETGSNNPTGIPANADMIPFHPYYTIKDILGLLLMITALLTLVLFSPDLLGDPDNYTPANPLNTPPHIKPEWYFLFAYAILRSIPNKLGGVLALVLSILILIIVPLLHTSKQRSMTFRPLSQCLFWLLTAXLFTLTWIGGQPVEHPYVIXGQXASILCFXIXXXLMXLTSLMENHLXXX</sequence>
<gene>
    <name type="primary">MT-CYB</name>
    <name type="synonym">COB</name>
    <name type="synonym">CYTB</name>
    <name type="synonym">MTCYB</name>
</gene>
<accession>Q957A9</accession>
<geneLocation type="mitochondrion"/>
<keyword id="KW-0249">Electron transport</keyword>
<keyword id="KW-0349">Heme</keyword>
<keyword id="KW-0408">Iron</keyword>
<keyword id="KW-0472">Membrane</keyword>
<keyword id="KW-0479">Metal-binding</keyword>
<keyword id="KW-0496">Mitochondrion</keyword>
<keyword id="KW-0999">Mitochondrion inner membrane</keyword>
<keyword id="KW-0679">Respiratory chain</keyword>
<keyword id="KW-0812">Transmembrane</keyword>
<keyword id="KW-1133">Transmembrane helix</keyword>
<keyword id="KW-0813">Transport</keyword>
<keyword id="KW-0830">Ubiquinone</keyword>